<dbReference type="EC" id="6.3.5.7" evidence="1"/>
<dbReference type="EMBL" id="AE016825">
    <property type="protein sequence ID" value="AAQ62014.1"/>
    <property type="molecule type" value="Genomic_DNA"/>
</dbReference>
<dbReference type="RefSeq" id="WP_011137901.1">
    <property type="nucleotide sequence ID" value="NC_005085.1"/>
</dbReference>
<dbReference type="SMR" id="Q7NPY7"/>
<dbReference type="STRING" id="243365.CV_4355"/>
<dbReference type="KEGG" id="cvi:CV_4355"/>
<dbReference type="eggNOG" id="COG0154">
    <property type="taxonomic scope" value="Bacteria"/>
</dbReference>
<dbReference type="HOGENOM" id="CLU_009600_0_3_4"/>
<dbReference type="OrthoDB" id="9811471at2"/>
<dbReference type="Proteomes" id="UP000001424">
    <property type="component" value="Chromosome"/>
</dbReference>
<dbReference type="GO" id="GO:0030956">
    <property type="term" value="C:glutamyl-tRNA(Gln) amidotransferase complex"/>
    <property type="evidence" value="ECO:0007669"/>
    <property type="project" value="InterPro"/>
</dbReference>
<dbReference type="GO" id="GO:0005524">
    <property type="term" value="F:ATP binding"/>
    <property type="evidence" value="ECO:0007669"/>
    <property type="project" value="UniProtKB-KW"/>
</dbReference>
<dbReference type="GO" id="GO:0050567">
    <property type="term" value="F:glutaminyl-tRNA synthase (glutamine-hydrolyzing) activity"/>
    <property type="evidence" value="ECO:0007669"/>
    <property type="project" value="UniProtKB-UniRule"/>
</dbReference>
<dbReference type="GO" id="GO:0006412">
    <property type="term" value="P:translation"/>
    <property type="evidence" value="ECO:0007669"/>
    <property type="project" value="UniProtKB-UniRule"/>
</dbReference>
<dbReference type="Gene3D" id="3.90.1300.10">
    <property type="entry name" value="Amidase signature (AS) domain"/>
    <property type="match status" value="1"/>
</dbReference>
<dbReference type="HAMAP" id="MF_00120">
    <property type="entry name" value="GatA"/>
    <property type="match status" value="1"/>
</dbReference>
<dbReference type="InterPro" id="IPR000120">
    <property type="entry name" value="Amidase"/>
</dbReference>
<dbReference type="InterPro" id="IPR020556">
    <property type="entry name" value="Amidase_CS"/>
</dbReference>
<dbReference type="InterPro" id="IPR023631">
    <property type="entry name" value="Amidase_dom"/>
</dbReference>
<dbReference type="InterPro" id="IPR036928">
    <property type="entry name" value="AS_sf"/>
</dbReference>
<dbReference type="InterPro" id="IPR004412">
    <property type="entry name" value="GatA"/>
</dbReference>
<dbReference type="NCBIfam" id="TIGR00132">
    <property type="entry name" value="gatA"/>
    <property type="match status" value="1"/>
</dbReference>
<dbReference type="PANTHER" id="PTHR11895:SF151">
    <property type="entry name" value="GLUTAMYL-TRNA(GLN) AMIDOTRANSFERASE SUBUNIT A"/>
    <property type="match status" value="1"/>
</dbReference>
<dbReference type="PANTHER" id="PTHR11895">
    <property type="entry name" value="TRANSAMIDASE"/>
    <property type="match status" value="1"/>
</dbReference>
<dbReference type="Pfam" id="PF01425">
    <property type="entry name" value="Amidase"/>
    <property type="match status" value="1"/>
</dbReference>
<dbReference type="SUPFAM" id="SSF75304">
    <property type="entry name" value="Amidase signature (AS) enzymes"/>
    <property type="match status" value="1"/>
</dbReference>
<dbReference type="PROSITE" id="PS00571">
    <property type="entry name" value="AMIDASES"/>
    <property type="match status" value="1"/>
</dbReference>
<sequence length="483" mass="51549">MTQATLKQLSQQLAAKQVSSVELASQYLDRIEALNPQLNAIVTVDREKTLAEARAADARLAAGDARALTGVPLVHKDLFCQQGWKTSCGSRMLDNFVSPYSAHVVEQCAAAGMVTLGRANMDEFAMGSSNENSFYGAVKNPWDLNAIPGGSSGGSAAAVAARLAPVATATDTGGSIRQPASHCGVTGIKPTYGVVSRYGMVAYASSLDQGGPIAQTAEDCALMLNVMAGFDARDSTSLERAKEDYARDLNQSLSGLKVGLPKEYFAAGLDADVARAVDNAVAELKKLGAEAVEISLPNTELSIPAYYVIAPAEASTNLSRYDGVRYGHRAKDYKDLVDMYEKTRAEGFGDEVKRRILVGSYVLSHGYYDAYYLKAQKIRRLIANDFKAAFEQCDVILGPVAPTAAFNIGEKSGDPVQMYLSDIYTLSVNLAGLPGMSVPAGFAANGRPIGLQIIGNYFAEARMLNVAHQFQQATDWHAKAPSL</sequence>
<reference key="1">
    <citation type="journal article" date="2003" name="Proc. Natl. Acad. Sci. U.S.A.">
        <title>The complete genome sequence of Chromobacterium violaceum reveals remarkable and exploitable bacterial adaptability.</title>
        <authorList>
            <person name="Vasconcelos A.T.R."/>
            <person name="de Almeida D.F."/>
            <person name="Hungria M."/>
            <person name="Guimaraes C.T."/>
            <person name="Antonio R.V."/>
            <person name="Almeida F.C."/>
            <person name="de Almeida L.G.P."/>
            <person name="de Almeida R."/>
            <person name="Alves-Gomes J.A."/>
            <person name="Andrade E.M."/>
            <person name="Araripe J."/>
            <person name="de Araujo M.F.F."/>
            <person name="Astolfi-Filho S."/>
            <person name="Azevedo V."/>
            <person name="Baptista A.J."/>
            <person name="Bataus L.A.M."/>
            <person name="Batista J.S."/>
            <person name="Belo A."/>
            <person name="van den Berg C."/>
            <person name="Bogo M."/>
            <person name="Bonatto S."/>
            <person name="Bordignon J."/>
            <person name="Brigido M.M."/>
            <person name="Brito C.A."/>
            <person name="Brocchi M."/>
            <person name="Burity H.A."/>
            <person name="Camargo A.A."/>
            <person name="Cardoso D.D.P."/>
            <person name="Carneiro N.P."/>
            <person name="Carraro D.M."/>
            <person name="Carvalho C.M.B."/>
            <person name="Cascardo J.C.M."/>
            <person name="Cavada B.S."/>
            <person name="Chueire L.M.O."/>
            <person name="Creczynski-Pasa T.B."/>
            <person name="Cunha-Junior N.C."/>
            <person name="Fagundes N."/>
            <person name="Falcao C.L."/>
            <person name="Fantinatti F."/>
            <person name="Farias I.P."/>
            <person name="Felipe M.S.S."/>
            <person name="Ferrari L.P."/>
            <person name="Ferro J.A."/>
            <person name="Ferro M.I.T."/>
            <person name="Franco G.R."/>
            <person name="Freitas N.S.A."/>
            <person name="Furlan L.R."/>
            <person name="Gazzinelli R.T."/>
            <person name="Gomes E.A."/>
            <person name="Goncalves P.R."/>
            <person name="Grangeiro T.B."/>
            <person name="Grattapaglia D."/>
            <person name="Grisard E.C."/>
            <person name="Hanna E.S."/>
            <person name="Jardim S.N."/>
            <person name="Laurino J."/>
            <person name="Leoi L.C.T."/>
            <person name="Lima L.F.A."/>
            <person name="Loureiro M.F."/>
            <person name="Lyra M.C.C.P."/>
            <person name="Madeira H.M.F."/>
            <person name="Manfio G.P."/>
            <person name="Maranhao A.Q."/>
            <person name="Martins W.S."/>
            <person name="di Mauro S.M.Z."/>
            <person name="de Medeiros S.R.B."/>
            <person name="Meissner R.V."/>
            <person name="Moreira M.A.M."/>
            <person name="Nascimento F.F."/>
            <person name="Nicolas M.F."/>
            <person name="Oliveira J.G."/>
            <person name="Oliveira S.C."/>
            <person name="Paixao R.F.C."/>
            <person name="Parente J.A."/>
            <person name="Pedrosa F.O."/>
            <person name="Pena S.D.J."/>
            <person name="Pereira J.O."/>
            <person name="Pereira M."/>
            <person name="Pinto L.S.R.C."/>
            <person name="Pinto L.S."/>
            <person name="Porto J.I.R."/>
            <person name="Potrich D.P."/>
            <person name="Ramalho-Neto C.E."/>
            <person name="Reis A.M.M."/>
            <person name="Rigo L.U."/>
            <person name="Rondinelli E."/>
            <person name="Santos E.B.P."/>
            <person name="Santos F.R."/>
            <person name="Schneider M.P.C."/>
            <person name="Seuanez H.N."/>
            <person name="Silva A.M.R."/>
            <person name="da Silva A.L.C."/>
            <person name="Silva D.W."/>
            <person name="Silva R."/>
            <person name="Simoes I.C."/>
            <person name="Simon D."/>
            <person name="Soares C.M.A."/>
            <person name="Soares R.B.A."/>
            <person name="Souza E.M."/>
            <person name="Souza K.R.L."/>
            <person name="Souza R.C."/>
            <person name="Steffens M.B.R."/>
            <person name="Steindel M."/>
            <person name="Teixeira S.R."/>
            <person name="Urmenyi T."/>
            <person name="Vettore A."/>
            <person name="Wassem R."/>
            <person name="Zaha A."/>
            <person name="Simpson A.J.G."/>
        </authorList>
    </citation>
    <scope>NUCLEOTIDE SEQUENCE [LARGE SCALE GENOMIC DNA]</scope>
    <source>
        <strain>ATCC 12472 / DSM 30191 / JCM 1249 / CCUG 213 / NBRC 12614 / NCIMB 9131 / NCTC 9757 / MK</strain>
    </source>
</reference>
<protein>
    <recommendedName>
        <fullName evidence="1">Glutamyl-tRNA(Gln) amidotransferase subunit A</fullName>
        <shortName evidence="1">Glu-ADT subunit A</shortName>
        <ecNumber evidence="1">6.3.5.7</ecNumber>
    </recommendedName>
</protein>
<name>GATA_CHRVO</name>
<comment type="function">
    <text evidence="1">Allows the formation of correctly charged Gln-tRNA(Gln) through the transamidation of misacylated Glu-tRNA(Gln) in organisms which lack glutaminyl-tRNA synthetase. The reaction takes place in the presence of glutamine and ATP through an activated gamma-phospho-Glu-tRNA(Gln).</text>
</comment>
<comment type="catalytic activity">
    <reaction evidence="1">
        <text>L-glutamyl-tRNA(Gln) + L-glutamine + ATP + H2O = L-glutaminyl-tRNA(Gln) + L-glutamate + ADP + phosphate + H(+)</text>
        <dbReference type="Rhea" id="RHEA:17521"/>
        <dbReference type="Rhea" id="RHEA-COMP:9681"/>
        <dbReference type="Rhea" id="RHEA-COMP:9684"/>
        <dbReference type="ChEBI" id="CHEBI:15377"/>
        <dbReference type="ChEBI" id="CHEBI:15378"/>
        <dbReference type="ChEBI" id="CHEBI:29985"/>
        <dbReference type="ChEBI" id="CHEBI:30616"/>
        <dbReference type="ChEBI" id="CHEBI:43474"/>
        <dbReference type="ChEBI" id="CHEBI:58359"/>
        <dbReference type="ChEBI" id="CHEBI:78520"/>
        <dbReference type="ChEBI" id="CHEBI:78521"/>
        <dbReference type="ChEBI" id="CHEBI:456216"/>
        <dbReference type="EC" id="6.3.5.7"/>
    </reaction>
</comment>
<comment type="subunit">
    <text evidence="1">Heterotrimer of A, B and C subunits.</text>
</comment>
<comment type="similarity">
    <text evidence="1">Belongs to the amidase family. GatA subfamily.</text>
</comment>
<organism>
    <name type="scientific">Chromobacterium violaceum (strain ATCC 12472 / DSM 30191 / JCM 1249 / CCUG 213 / NBRC 12614 / NCIMB 9131 / NCTC 9757 / MK)</name>
    <dbReference type="NCBI Taxonomy" id="243365"/>
    <lineage>
        <taxon>Bacteria</taxon>
        <taxon>Pseudomonadati</taxon>
        <taxon>Pseudomonadota</taxon>
        <taxon>Betaproteobacteria</taxon>
        <taxon>Neisseriales</taxon>
        <taxon>Chromobacteriaceae</taxon>
        <taxon>Chromobacterium</taxon>
    </lineage>
</organism>
<proteinExistence type="inferred from homology"/>
<accession>Q7NPY7</accession>
<keyword id="KW-0067">ATP-binding</keyword>
<keyword id="KW-0436">Ligase</keyword>
<keyword id="KW-0547">Nucleotide-binding</keyword>
<keyword id="KW-0648">Protein biosynthesis</keyword>
<keyword id="KW-1185">Reference proteome</keyword>
<gene>
    <name evidence="1" type="primary">gatA</name>
    <name type="ordered locus">CV_4355</name>
</gene>
<feature type="chain" id="PRO_0000105154" description="Glutamyl-tRNA(Gln) amidotransferase subunit A">
    <location>
        <begin position="1"/>
        <end position="483"/>
    </location>
</feature>
<feature type="active site" description="Charge relay system" evidence="1">
    <location>
        <position position="76"/>
    </location>
</feature>
<feature type="active site" description="Charge relay system" evidence="1">
    <location>
        <position position="151"/>
    </location>
</feature>
<feature type="active site" description="Acyl-ester intermediate" evidence="1">
    <location>
        <position position="175"/>
    </location>
</feature>
<evidence type="ECO:0000255" key="1">
    <source>
        <dbReference type="HAMAP-Rule" id="MF_00120"/>
    </source>
</evidence>